<evidence type="ECO:0000255" key="1">
    <source>
        <dbReference type="HAMAP-Rule" id="MF_00361"/>
    </source>
</evidence>
<name>NADK_RICCN</name>
<feature type="chain" id="PRO_0000120652" description="NAD kinase">
    <location>
        <begin position="1"/>
        <end position="255"/>
    </location>
</feature>
<feature type="active site" description="Proton acceptor" evidence="1">
    <location>
        <position position="44"/>
    </location>
</feature>
<feature type="binding site" evidence="1">
    <location>
        <begin position="44"/>
        <end position="45"/>
    </location>
    <ligand>
        <name>NAD(+)</name>
        <dbReference type="ChEBI" id="CHEBI:57540"/>
    </ligand>
</feature>
<feature type="binding site" evidence="1">
    <location>
        <position position="49"/>
    </location>
    <ligand>
        <name>NAD(+)</name>
        <dbReference type="ChEBI" id="CHEBI:57540"/>
    </ligand>
</feature>
<feature type="binding site" evidence="1">
    <location>
        <begin position="114"/>
        <end position="115"/>
    </location>
    <ligand>
        <name>NAD(+)</name>
        <dbReference type="ChEBI" id="CHEBI:57540"/>
    </ligand>
</feature>
<feature type="binding site" evidence="1">
    <location>
        <position position="144"/>
    </location>
    <ligand>
        <name>NAD(+)</name>
        <dbReference type="ChEBI" id="CHEBI:57540"/>
    </ligand>
</feature>
<feature type="binding site" evidence="1">
    <location>
        <position position="152"/>
    </location>
    <ligand>
        <name>NAD(+)</name>
        <dbReference type="ChEBI" id="CHEBI:57540"/>
    </ligand>
</feature>
<feature type="binding site" evidence="1">
    <location>
        <begin position="155"/>
        <end position="160"/>
    </location>
    <ligand>
        <name>NAD(+)</name>
        <dbReference type="ChEBI" id="CHEBI:57540"/>
    </ligand>
</feature>
<feature type="binding site" evidence="1">
    <location>
        <position position="216"/>
    </location>
    <ligand>
        <name>NAD(+)</name>
        <dbReference type="ChEBI" id="CHEBI:57540"/>
    </ligand>
</feature>
<accession>Q92I08</accession>
<gene>
    <name evidence="1" type="primary">nadK</name>
    <name type="ordered locus">RC0612</name>
</gene>
<sequence>MNINKIALIYNHNSKHLAIIEEIKKLYNYCKIEEAEVIIVIGGDGELLHNIHRYMHLNIPFYGVNLGSLGFLMNPLDTKKLLQNIHESTVSILNPLLMQVEDTSGQIYTALAINEVSIFRKTNQAAKFRIEVNGIERMSELVADGALVATPAGSSAYNLSASGPILPLESNMLCLTPICSFRPRRWHGALLLASATIKFEILNTNKRPVNATADFQEFNNITNVTVKSTKDKPVKLLFNKNHTLEDRIIKEQFGG</sequence>
<comment type="function">
    <text evidence="1">Involved in the regulation of the intracellular balance of NAD and NADP, and is a key enzyme in the biosynthesis of NADP. Catalyzes specifically the phosphorylation on 2'-hydroxyl of the adenosine moiety of NAD to yield NADP.</text>
</comment>
<comment type="catalytic activity">
    <reaction evidence="1">
        <text>NAD(+) + ATP = ADP + NADP(+) + H(+)</text>
        <dbReference type="Rhea" id="RHEA:18629"/>
        <dbReference type="ChEBI" id="CHEBI:15378"/>
        <dbReference type="ChEBI" id="CHEBI:30616"/>
        <dbReference type="ChEBI" id="CHEBI:57540"/>
        <dbReference type="ChEBI" id="CHEBI:58349"/>
        <dbReference type="ChEBI" id="CHEBI:456216"/>
        <dbReference type="EC" id="2.7.1.23"/>
    </reaction>
</comment>
<comment type="cofactor">
    <cofactor evidence="1">
        <name>a divalent metal cation</name>
        <dbReference type="ChEBI" id="CHEBI:60240"/>
    </cofactor>
</comment>
<comment type="subcellular location">
    <subcellularLocation>
        <location evidence="1">Cytoplasm</location>
    </subcellularLocation>
</comment>
<comment type="similarity">
    <text evidence="1">Belongs to the NAD kinase family.</text>
</comment>
<protein>
    <recommendedName>
        <fullName evidence="1">NAD kinase</fullName>
        <ecNumber evidence="1">2.7.1.23</ecNumber>
    </recommendedName>
    <alternativeName>
        <fullName evidence="1">ATP-dependent NAD kinase</fullName>
    </alternativeName>
</protein>
<keyword id="KW-0067">ATP-binding</keyword>
<keyword id="KW-0963">Cytoplasm</keyword>
<keyword id="KW-0418">Kinase</keyword>
<keyword id="KW-0520">NAD</keyword>
<keyword id="KW-0521">NADP</keyword>
<keyword id="KW-0547">Nucleotide-binding</keyword>
<keyword id="KW-0808">Transferase</keyword>
<reference key="1">
    <citation type="journal article" date="2001" name="Science">
        <title>Mechanisms of evolution in Rickettsia conorii and R. prowazekii.</title>
        <authorList>
            <person name="Ogata H."/>
            <person name="Audic S."/>
            <person name="Renesto-Audiffren P."/>
            <person name="Fournier P.-E."/>
            <person name="Barbe V."/>
            <person name="Samson D."/>
            <person name="Roux V."/>
            <person name="Cossart P."/>
            <person name="Weissenbach J."/>
            <person name="Claverie J.-M."/>
            <person name="Raoult D."/>
        </authorList>
    </citation>
    <scope>NUCLEOTIDE SEQUENCE [LARGE SCALE GENOMIC DNA]</scope>
    <source>
        <strain>ATCC VR-613 / Malish 7</strain>
    </source>
</reference>
<organism>
    <name type="scientific">Rickettsia conorii (strain ATCC VR-613 / Malish 7)</name>
    <dbReference type="NCBI Taxonomy" id="272944"/>
    <lineage>
        <taxon>Bacteria</taxon>
        <taxon>Pseudomonadati</taxon>
        <taxon>Pseudomonadota</taxon>
        <taxon>Alphaproteobacteria</taxon>
        <taxon>Rickettsiales</taxon>
        <taxon>Rickettsiaceae</taxon>
        <taxon>Rickettsieae</taxon>
        <taxon>Rickettsia</taxon>
        <taxon>spotted fever group</taxon>
    </lineage>
</organism>
<proteinExistence type="inferred from homology"/>
<dbReference type="EC" id="2.7.1.23" evidence="1"/>
<dbReference type="EMBL" id="AE006914">
    <property type="protein sequence ID" value="AAL03150.1"/>
    <property type="molecule type" value="Genomic_DNA"/>
</dbReference>
<dbReference type="PIR" id="D97776">
    <property type="entry name" value="D97776"/>
</dbReference>
<dbReference type="RefSeq" id="WP_010977242.1">
    <property type="nucleotide sequence ID" value="NC_003103.1"/>
</dbReference>
<dbReference type="SMR" id="Q92I08"/>
<dbReference type="GeneID" id="927702"/>
<dbReference type="KEGG" id="rco:RC0612"/>
<dbReference type="PATRIC" id="fig|272944.4.peg.698"/>
<dbReference type="HOGENOM" id="CLU_073319_0_0_5"/>
<dbReference type="Proteomes" id="UP000000816">
    <property type="component" value="Chromosome"/>
</dbReference>
<dbReference type="GO" id="GO:0005737">
    <property type="term" value="C:cytoplasm"/>
    <property type="evidence" value="ECO:0007669"/>
    <property type="project" value="UniProtKB-SubCell"/>
</dbReference>
<dbReference type="GO" id="GO:0005524">
    <property type="term" value="F:ATP binding"/>
    <property type="evidence" value="ECO:0007669"/>
    <property type="project" value="UniProtKB-KW"/>
</dbReference>
<dbReference type="GO" id="GO:0046872">
    <property type="term" value="F:metal ion binding"/>
    <property type="evidence" value="ECO:0007669"/>
    <property type="project" value="UniProtKB-UniRule"/>
</dbReference>
<dbReference type="GO" id="GO:0051287">
    <property type="term" value="F:NAD binding"/>
    <property type="evidence" value="ECO:0007669"/>
    <property type="project" value="UniProtKB-ARBA"/>
</dbReference>
<dbReference type="GO" id="GO:0003951">
    <property type="term" value="F:NAD+ kinase activity"/>
    <property type="evidence" value="ECO:0007669"/>
    <property type="project" value="UniProtKB-UniRule"/>
</dbReference>
<dbReference type="GO" id="GO:0019674">
    <property type="term" value="P:NAD metabolic process"/>
    <property type="evidence" value="ECO:0007669"/>
    <property type="project" value="InterPro"/>
</dbReference>
<dbReference type="GO" id="GO:0006741">
    <property type="term" value="P:NADP biosynthetic process"/>
    <property type="evidence" value="ECO:0007669"/>
    <property type="project" value="UniProtKB-UniRule"/>
</dbReference>
<dbReference type="Gene3D" id="3.40.50.10330">
    <property type="entry name" value="Probable inorganic polyphosphate/atp-NAD kinase, domain 1"/>
    <property type="match status" value="1"/>
</dbReference>
<dbReference type="Gene3D" id="2.60.200.30">
    <property type="entry name" value="Probable inorganic polyphosphate/atp-NAD kinase, domain 2"/>
    <property type="match status" value="1"/>
</dbReference>
<dbReference type="HAMAP" id="MF_00361">
    <property type="entry name" value="NAD_kinase"/>
    <property type="match status" value="1"/>
</dbReference>
<dbReference type="InterPro" id="IPR017438">
    <property type="entry name" value="ATP-NAD_kinase_N"/>
</dbReference>
<dbReference type="InterPro" id="IPR017437">
    <property type="entry name" value="ATP-NAD_kinase_PpnK-typ_C"/>
</dbReference>
<dbReference type="InterPro" id="IPR016064">
    <property type="entry name" value="NAD/diacylglycerol_kinase_sf"/>
</dbReference>
<dbReference type="InterPro" id="IPR002504">
    <property type="entry name" value="NADK"/>
</dbReference>
<dbReference type="NCBIfam" id="NF003406">
    <property type="entry name" value="PRK04761.1"/>
    <property type="match status" value="1"/>
</dbReference>
<dbReference type="PANTHER" id="PTHR20275">
    <property type="entry name" value="NAD KINASE"/>
    <property type="match status" value="1"/>
</dbReference>
<dbReference type="PANTHER" id="PTHR20275:SF0">
    <property type="entry name" value="NAD KINASE"/>
    <property type="match status" value="1"/>
</dbReference>
<dbReference type="Pfam" id="PF01513">
    <property type="entry name" value="NAD_kinase"/>
    <property type="match status" value="1"/>
</dbReference>
<dbReference type="Pfam" id="PF20143">
    <property type="entry name" value="NAD_kinase_C"/>
    <property type="match status" value="1"/>
</dbReference>
<dbReference type="SUPFAM" id="SSF111331">
    <property type="entry name" value="NAD kinase/diacylglycerol kinase-like"/>
    <property type="match status" value="1"/>
</dbReference>